<keyword id="KW-0050">Antiport</keyword>
<keyword id="KW-1003">Cell membrane</keyword>
<keyword id="KW-0406">Ion transport</keyword>
<keyword id="KW-0472">Membrane</keyword>
<keyword id="KW-0812">Transmembrane</keyword>
<keyword id="KW-1133">Transmembrane helix</keyword>
<keyword id="KW-0813">Transport</keyword>
<comment type="subunit">
    <text evidence="1">May form a heterooligomeric complex that consists of seven subunits: mnhA2, mnhB2, mnhC2, mnhD2, mnhE2, mnhF2 and mnhG2.</text>
</comment>
<comment type="subcellular location">
    <subcellularLocation>
        <location evidence="3">Cell membrane</location>
        <topology evidence="3">Multi-pass membrane protein</topology>
    </subcellularLocation>
</comment>
<comment type="similarity">
    <text evidence="3">Belongs to the CPA3 antiporters (TC 2.A.63) subunit E family.</text>
</comment>
<protein>
    <recommendedName>
        <fullName>Putative antiporter subunit mnhE2</fullName>
    </recommendedName>
    <alternativeName>
        <fullName>Mrp complex subunit E2</fullName>
    </alternativeName>
    <alternativeName>
        <fullName>Putative NADH-ubiquinone oxidoreductase subunit mnhE2</fullName>
    </alternativeName>
</protein>
<evidence type="ECO:0000250" key="1"/>
<evidence type="ECO:0000255" key="2"/>
<evidence type="ECO:0000305" key="3"/>
<name>MNHE2_STAA3</name>
<gene>
    <name type="primary">mnhE2</name>
    <name type="synonym">mrpE2</name>
    <name type="ordered locus">SAUSA300_0614</name>
</gene>
<dbReference type="EMBL" id="CP000255">
    <property type="protein sequence ID" value="ABD21187.1"/>
    <property type="molecule type" value="Genomic_DNA"/>
</dbReference>
<dbReference type="RefSeq" id="WP_001071973.1">
    <property type="nucleotide sequence ID" value="NZ_CP027476.1"/>
</dbReference>
<dbReference type="SMR" id="Q2FJ11"/>
<dbReference type="KEGG" id="saa:SAUSA300_0614"/>
<dbReference type="HOGENOM" id="CLU_086615_3_2_9"/>
<dbReference type="OMA" id="KNDWAIT"/>
<dbReference type="Proteomes" id="UP000001939">
    <property type="component" value="Chromosome"/>
</dbReference>
<dbReference type="GO" id="GO:0005886">
    <property type="term" value="C:plasma membrane"/>
    <property type="evidence" value="ECO:0007669"/>
    <property type="project" value="UniProtKB-SubCell"/>
</dbReference>
<dbReference type="GO" id="GO:0015297">
    <property type="term" value="F:antiporter activity"/>
    <property type="evidence" value="ECO:0007669"/>
    <property type="project" value="UniProtKB-KW"/>
</dbReference>
<dbReference type="GO" id="GO:0008324">
    <property type="term" value="F:monoatomic cation transmembrane transporter activity"/>
    <property type="evidence" value="ECO:0007669"/>
    <property type="project" value="InterPro"/>
</dbReference>
<dbReference type="InterPro" id="IPR002758">
    <property type="entry name" value="Cation_antiport_E"/>
</dbReference>
<dbReference type="NCBIfam" id="NF006517">
    <property type="entry name" value="PRK08965.1-1"/>
    <property type="match status" value="1"/>
</dbReference>
<dbReference type="PANTHER" id="PTHR34584">
    <property type="entry name" value="NA(+)/H(+) ANTIPORTER SUBUNIT E1"/>
    <property type="match status" value="1"/>
</dbReference>
<dbReference type="PANTHER" id="PTHR34584:SF1">
    <property type="entry name" value="NA(+)_H(+) ANTIPORTER SUBUNIT E1"/>
    <property type="match status" value="1"/>
</dbReference>
<dbReference type="Pfam" id="PF01899">
    <property type="entry name" value="MNHE"/>
    <property type="match status" value="1"/>
</dbReference>
<dbReference type="PIRSF" id="PIRSF019239">
    <property type="entry name" value="MrpE"/>
    <property type="match status" value="1"/>
</dbReference>
<organism>
    <name type="scientific">Staphylococcus aureus (strain USA300)</name>
    <dbReference type="NCBI Taxonomy" id="367830"/>
    <lineage>
        <taxon>Bacteria</taxon>
        <taxon>Bacillati</taxon>
        <taxon>Bacillota</taxon>
        <taxon>Bacilli</taxon>
        <taxon>Bacillales</taxon>
        <taxon>Staphylococcaceae</taxon>
        <taxon>Staphylococcus</taxon>
    </lineage>
</organism>
<accession>Q2FJ11</accession>
<proteinExistence type="inferred from homology"/>
<sequence length="160" mass="18851">MNQIVLNIIIAFLWVLFQDEDHFKFSTFFSGYLIGLIVIYILHRFFSDDFYVRKIWVAIKFLGVYLYQLITSSISTINYILFKTKDMNPGLLSYETRLTSDWSITFLTILIIITPGSTVIRISQDSKKFFIHSIDVSEKEKDSLLRSIKHYEDLILEVSR</sequence>
<feature type="chain" id="PRO_0000372223" description="Putative antiporter subunit mnhE2">
    <location>
        <begin position="1"/>
        <end position="160"/>
    </location>
</feature>
<feature type="transmembrane region" description="Helical" evidence="2">
    <location>
        <begin position="22"/>
        <end position="42"/>
    </location>
</feature>
<feature type="transmembrane region" description="Helical" evidence="2">
    <location>
        <begin position="55"/>
        <end position="75"/>
    </location>
</feature>
<feature type="transmembrane region" description="Helical" evidence="2">
    <location>
        <begin position="100"/>
        <end position="120"/>
    </location>
</feature>
<reference key="1">
    <citation type="journal article" date="2006" name="Lancet">
        <title>Complete genome sequence of USA300, an epidemic clone of community-acquired meticillin-resistant Staphylococcus aureus.</title>
        <authorList>
            <person name="Diep B.A."/>
            <person name="Gill S.R."/>
            <person name="Chang R.F."/>
            <person name="Phan T.H."/>
            <person name="Chen J.H."/>
            <person name="Davidson M.G."/>
            <person name="Lin F."/>
            <person name="Lin J."/>
            <person name="Carleton H.A."/>
            <person name="Mongodin E.F."/>
            <person name="Sensabaugh G.F."/>
            <person name="Perdreau-Remington F."/>
        </authorList>
    </citation>
    <scope>NUCLEOTIDE SEQUENCE [LARGE SCALE GENOMIC DNA]</scope>
    <source>
        <strain>USA300</strain>
    </source>
</reference>